<dbReference type="EC" id="1.97.1.12" evidence="1"/>
<dbReference type="EMBL" id="CT971583">
    <property type="protein sequence ID" value="CAK22624.1"/>
    <property type="molecule type" value="Genomic_DNA"/>
</dbReference>
<dbReference type="SMR" id="A5GI59"/>
<dbReference type="STRING" id="32051.SynWH7803_0198"/>
<dbReference type="KEGG" id="syx:SynWH7803_0198"/>
<dbReference type="eggNOG" id="COG1143">
    <property type="taxonomic scope" value="Bacteria"/>
</dbReference>
<dbReference type="HOGENOM" id="CLU_139698_8_0_3"/>
<dbReference type="OrthoDB" id="9804603at2"/>
<dbReference type="Proteomes" id="UP000001566">
    <property type="component" value="Chromosome"/>
</dbReference>
<dbReference type="GO" id="GO:0009522">
    <property type="term" value="C:photosystem I"/>
    <property type="evidence" value="ECO:0007669"/>
    <property type="project" value="UniProtKB-KW"/>
</dbReference>
<dbReference type="GO" id="GO:0031676">
    <property type="term" value="C:plasma membrane-derived thylakoid membrane"/>
    <property type="evidence" value="ECO:0007669"/>
    <property type="project" value="UniProtKB-SubCell"/>
</dbReference>
<dbReference type="GO" id="GO:0051539">
    <property type="term" value="F:4 iron, 4 sulfur cluster binding"/>
    <property type="evidence" value="ECO:0007669"/>
    <property type="project" value="UniProtKB-KW"/>
</dbReference>
<dbReference type="GO" id="GO:0009055">
    <property type="term" value="F:electron transfer activity"/>
    <property type="evidence" value="ECO:0007669"/>
    <property type="project" value="UniProtKB-UniRule"/>
</dbReference>
<dbReference type="GO" id="GO:0046872">
    <property type="term" value="F:metal ion binding"/>
    <property type="evidence" value="ECO:0007669"/>
    <property type="project" value="UniProtKB-KW"/>
</dbReference>
<dbReference type="GO" id="GO:0016491">
    <property type="term" value="F:oxidoreductase activity"/>
    <property type="evidence" value="ECO:0007669"/>
    <property type="project" value="UniProtKB-KW"/>
</dbReference>
<dbReference type="GO" id="GO:0009773">
    <property type="term" value="P:photosynthetic electron transport in photosystem I"/>
    <property type="evidence" value="ECO:0007669"/>
    <property type="project" value="InterPro"/>
</dbReference>
<dbReference type="FunFam" id="3.30.70.20:FF:000001">
    <property type="entry name" value="Photosystem I iron-sulfur center"/>
    <property type="match status" value="1"/>
</dbReference>
<dbReference type="Gene3D" id="3.30.70.20">
    <property type="match status" value="1"/>
</dbReference>
<dbReference type="HAMAP" id="MF_01303">
    <property type="entry name" value="PSI_PsaC"/>
    <property type="match status" value="1"/>
</dbReference>
<dbReference type="InterPro" id="IPR017896">
    <property type="entry name" value="4Fe4S_Fe-S-bd"/>
</dbReference>
<dbReference type="InterPro" id="IPR017900">
    <property type="entry name" value="4Fe4S_Fe_S_CS"/>
</dbReference>
<dbReference type="InterPro" id="IPR050157">
    <property type="entry name" value="PSI_iron-sulfur_center"/>
</dbReference>
<dbReference type="InterPro" id="IPR017491">
    <property type="entry name" value="PSI_PsaC"/>
</dbReference>
<dbReference type="NCBIfam" id="TIGR03048">
    <property type="entry name" value="PS_I_psaC"/>
    <property type="match status" value="1"/>
</dbReference>
<dbReference type="PANTHER" id="PTHR24960:SF79">
    <property type="entry name" value="PHOTOSYSTEM I IRON-SULFUR CENTER"/>
    <property type="match status" value="1"/>
</dbReference>
<dbReference type="PANTHER" id="PTHR24960">
    <property type="entry name" value="PHOTOSYSTEM I IRON-SULFUR CENTER-RELATED"/>
    <property type="match status" value="1"/>
</dbReference>
<dbReference type="Pfam" id="PF12838">
    <property type="entry name" value="Fer4_7"/>
    <property type="match status" value="1"/>
</dbReference>
<dbReference type="SUPFAM" id="SSF54862">
    <property type="entry name" value="4Fe-4S ferredoxins"/>
    <property type="match status" value="1"/>
</dbReference>
<dbReference type="PROSITE" id="PS00198">
    <property type="entry name" value="4FE4S_FER_1"/>
    <property type="match status" value="2"/>
</dbReference>
<dbReference type="PROSITE" id="PS51379">
    <property type="entry name" value="4FE4S_FER_2"/>
    <property type="match status" value="2"/>
</dbReference>
<name>PSAC_SYNPW</name>
<proteinExistence type="inferred from homology"/>
<accession>A5GI59</accession>
<comment type="function">
    <text evidence="1">Apoprotein for the two 4Fe-4S centers FA and FB of photosystem I (PSI); essential for photochemical activity. FB is the terminal electron acceptor of PSI, donating electrons to ferredoxin. The C-terminus interacts with PsaA/B/D and helps assemble the protein into the PSI complex. Required for binding of PsaD and PsaE to PSI. PSI is a plastocyanin/cytochrome c6-ferredoxin oxidoreductase, converting photonic excitation into a charge separation, which transfers an electron from the donor P700 chlorophyll pair to the spectroscopically characterized acceptors A0, A1, FX, FA and FB in turn.</text>
</comment>
<comment type="catalytic activity">
    <reaction evidence="1">
        <text>reduced [plastocyanin] + hnu + oxidized [2Fe-2S]-[ferredoxin] = oxidized [plastocyanin] + reduced [2Fe-2S]-[ferredoxin]</text>
        <dbReference type="Rhea" id="RHEA:30407"/>
        <dbReference type="Rhea" id="RHEA-COMP:10000"/>
        <dbReference type="Rhea" id="RHEA-COMP:10001"/>
        <dbReference type="Rhea" id="RHEA-COMP:10039"/>
        <dbReference type="Rhea" id="RHEA-COMP:10040"/>
        <dbReference type="ChEBI" id="CHEBI:29036"/>
        <dbReference type="ChEBI" id="CHEBI:30212"/>
        <dbReference type="ChEBI" id="CHEBI:33737"/>
        <dbReference type="ChEBI" id="CHEBI:33738"/>
        <dbReference type="ChEBI" id="CHEBI:49552"/>
        <dbReference type="EC" id="1.97.1.12"/>
    </reaction>
</comment>
<comment type="cofactor">
    <cofactor evidence="1">
        <name>[4Fe-4S] cluster</name>
        <dbReference type="ChEBI" id="CHEBI:49883"/>
    </cofactor>
    <text evidence="1">Binds 2 [4Fe-4S] clusters. Cluster 2 is most probably the spectroscopically characterized electron acceptor FA and cluster 1 is most probably FB.</text>
</comment>
<comment type="subunit">
    <text evidence="1">The cyanobacterial PSI reaction center is composed of one copy each of PsaA,B,C,D,E,F,I,J,K,L,M and X, and forms trimeric complexes.</text>
</comment>
<comment type="subcellular location">
    <subcellularLocation>
        <location evidence="1">Cellular thylakoid membrane</location>
        <topology evidence="1">Peripheral membrane protein</topology>
        <orientation evidence="1">Cytoplasmic side</orientation>
    </subcellularLocation>
</comment>
<sequence length="81" mass="8844">MSHAVKIYDTCIGCTQCVRACPLDVLEMVPWDGCKAGQIASSPRTEDCVGCKRCETACPTDFLSIRVYLGDETSRSMGLSY</sequence>
<feature type="chain" id="PRO_1000051806" description="Photosystem I iron-sulfur center">
    <location>
        <begin position="1"/>
        <end position="81"/>
    </location>
</feature>
<feature type="domain" description="4Fe-4S ferredoxin-type 1" evidence="1">
    <location>
        <begin position="2"/>
        <end position="31"/>
    </location>
</feature>
<feature type="domain" description="4Fe-4S ferredoxin-type 2" evidence="1">
    <location>
        <begin position="37"/>
        <end position="68"/>
    </location>
</feature>
<feature type="binding site" evidence="1">
    <location>
        <position position="11"/>
    </location>
    <ligand>
        <name>[4Fe-4S] cluster</name>
        <dbReference type="ChEBI" id="CHEBI:49883"/>
        <label>1</label>
    </ligand>
</feature>
<feature type="binding site" evidence="1">
    <location>
        <position position="14"/>
    </location>
    <ligand>
        <name>[4Fe-4S] cluster</name>
        <dbReference type="ChEBI" id="CHEBI:49883"/>
        <label>1</label>
    </ligand>
</feature>
<feature type="binding site" evidence="1">
    <location>
        <position position="17"/>
    </location>
    <ligand>
        <name>[4Fe-4S] cluster</name>
        <dbReference type="ChEBI" id="CHEBI:49883"/>
        <label>1</label>
    </ligand>
</feature>
<feature type="binding site" evidence="1">
    <location>
        <position position="21"/>
    </location>
    <ligand>
        <name>[4Fe-4S] cluster</name>
        <dbReference type="ChEBI" id="CHEBI:49883"/>
        <label>2</label>
    </ligand>
</feature>
<feature type="binding site" evidence="1">
    <location>
        <position position="48"/>
    </location>
    <ligand>
        <name>[4Fe-4S] cluster</name>
        <dbReference type="ChEBI" id="CHEBI:49883"/>
        <label>2</label>
    </ligand>
</feature>
<feature type="binding site" evidence="1">
    <location>
        <position position="51"/>
    </location>
    <ligand>
        <name>[4Fe-4S] cluster</name>
        <dbReference type="ChEBI" id="CHEBI:49883"/>
        <label>2</label>
    </ligand>
</feature>
<feature type="binding site" evidence="1">
    <location>
        <position position="54"/>
    </location>
    <ligand>
        <name>[4Fe-4S] cluster</name>
        <dbReference type="ChEBI" id="CHEBI:49883"/>
        <label>2</label>
    </ligand>
</feature>
<feature type="binding site" evidence="1">
    <location>
        <position position="58"/>
    </location>
    <ligand>
        <name>[4Fe-4S] cluster</name>
        <dbReference type="ChEBI" id="CHEBI:49883"/>
        <label>1</label>
    </ligand>
</feature>
<keyword id="KW-0004">4Fe-4S</keyword>
<keyword id="KW-0249">Electron transport</keyword>
<keyword id="KW-0408">Iron</keyword>
<keyword id="KW-0411">Iron-sulfur</keyword>
<keyword id="KW-0472">Membrane</keyword>
<keyword id="KW-0479">Metal-binding</keyword>
<keyword id="KW-0560">Oxidoreductase</keyword>
<keyword id="KW-0602">Photosynthesis</keyword>
<keyword id="KW-0603">Photosystem I</keyword>
<keyword id="KW-1185">Reference proteome</keyword>
<keyword id="KW-0677">Repeat</keyword>
<keyword id="KW-0793">Thylakoid</keyword>
<keyword id="KW-0813">Transport</keyword>
<organism>
    <name type="scientific">Synechococcus sp. (strain WH7803)</name>
    <dbReference type="NCBI Taxonomy" id="32051"/>
    <lineage>
        <taxon>Bacteria</taxon>
        <taxon>Bacillati</taxon>
        <taxon>Cyanobacteriota</taxon>
        <taxon>Cyanophyceae</taxon>
        <taxon>Synechococcales</taxon>
        <taxon>Synechococcaceae</taxon>
        <taxon>Synechococcus</taxon>
    </lineage>
</organism>
<evidence type="ECO:0000255" key="1">
    <source>
        <dbReference type="HAMAP-Rule" id="MF_01303"/>
    </source>
</evidence>
<protein>
    <recommendedName>
        <fullName evidence="1">Photosystem I iron-sulfur center</fullName>
        <ecNumber evidence="1">1.97.1.12</ecNumber>
    </recommendedName>
    <alternativeName>
        <fullName evidence="1">9 kDa polypeptide</fullName>
    </alternativeName>
    <alternativeName>
        <fullName evidence="1">PSI-C</fullName>
    </alternativeName>
    <alternativeName>
        <fullName evidence="1">Photosystem I subunit VII</fullName>
    </alternativeName>
    <alternativeName>
        <fullName evidence="1">PsaC</fullName>
    </alternativeName>
</protein>
<reference key="1">
    <citation type="submission" date="2006-05" db="EMBL/GenBank/DDBJ databases">
        <authorList>
            <consortium name="Genoscope"/>
        </authorList>
    </citation>
    <scope>NUCLEOTIDE SEQUENCE [LARGE SCALE GENOMIC DNA]</scope>
    <source>
        <strain>WH7803</strain>
    </source>
</reference>
<gene>
    <name evidence="1" type="primary">psaC</name>
    <name type="ordered locus">SynWH7803_0198</name>
</gene>